<evidence type="ECO:0000255" key="1">
    <source>
        <dbReference type="HAMAP-Rule" id="MF_01699"/>
    </source>
</evidence>
<reference key="1">
    <citation type="journal article" date="2010" name="J. Bacteriol.">
        <title>Genome sequence of Pantoea ananatis LMG20103, the causative agent of Eucalyptus blight and dieback.</title>
        <authorList>
            <person name="De Maayer P."/>
            <person name="Chan W.Y."/>
            <person name="Venter S.N."/>
            <person name="Toth I.K."/>
            <person name="Birch P.R."/>
            <person name="Joubert F."/>
            <person name="Coutinho T.A."/>
        </authorList>
    </citation>
    <scope>NUCLEOTIDE SEQUENCE [LARGE SCALE GENOMIC DNA]</scope>
    <source>
        <strain>LMG 20103</strain>
    </source>
</reference>
<protein>
    <recommendedName>
        <fullName evidence="1">Pyrimidine monooxygenase RutA</fullName>
        <ecNumber evidence="1">1.14.99.46</ecNumber>
    </recommendedName>
</protein>
<feature type="chain" id="PRO_0000402634" description="Pyrimidine monooxygenase RutA">
    <location>
        <begin position="1"/>
        <end position="363"/>
    </location>
</feature>
<feature type="binding site" evidence="1">
    <location>
        <begin position="49"/>
        <end position="50"/>
    </location>
    <ligand>
        <name>FMN</name>
        <dbReference type="ChEBI" id="CHEBI:58210"/>
    </ligand>
</feature>
<feature type="binding site" evidence="1">
    <location>
        <position position="115"/>
    </location>
    <ligand>
        <name>FMN</name>
        <dbReference type="ChEBI" id="CHEBI:58210"/>
    </ligand>
</feature>
<feature type="binding site" evidence="1">
    <location>
        <position position="124"/>
    </location>
    <ligand>
        <name>FMN</name>
        <dbReference type="ChEBI" id="CHEBI:58210"/>
    </ligand>
</feature>
<feature type="binding site" evidence="1">
    <location>
        <begin position="140"/>
        <end position="141"/>
    </location>
    <ligand>
        <name>FMN</name>
        <dbReference type="ChEBI" id="CHEBI:58210"/>
    </ligand>
</feature>
<feature type="binding site" evidence="1">
    <location>
        <position position="190"/>
    </location>
    <ligand>
        <name>FMN</name>
        <dbReference type="ChEBI" id="CHEBI:58210"/>
    </ligand>
</feature>
<comment type="function">
    <text evidence="1">Catalyzes the pyrimidine ring opening between N-3 and C-4 by an unusual flavin hydroperoxide-catalyzed mechanism, adding oxygen atoms in the process to yield ureidoacrylate peracid, that immediately reacts with FMN forming ureidoacrylate and FMN-N(5)-oxide. The FMN-N(5)-oxide reacts spontaneously with NADH to produce FMN. Requires the flavin reductase RutF to regenerate FMN in vivo.</text>
</comment>
<comment type="catalytic activity">
    <reaction evidence="1">
        <text>uracil + FMNH2 + NADH + O2 = (Z)-3-ureidoacrylate + FMN + NAD(+) + H2O + H(+)</text>
        <dbReference type="Rhea" id="RHEA:31587"/>
        <dbReference type="ChEBI" id="CHEBI:15377"/>
        <dbReference type="ChEBI" id="CHEBI:15378"/>
        <dbReference type="ChEBI" id="CHEBI:15379"/>
        <dbReference type="ChEBI" id="CHEBI:17568"/>
        <dbReference type="ChEBI" id="CHEBI:57540"/>
        <dbReference type="ChEBI" id="CHEBI:57618"/>
        <dbReference type="ChEBI" id="CHEBI:57945"/>
        <dbReference type="ChEBI" id="CHEBI:58210"/>
        <dbReference type="ChEBI" id="CHEBI:59891"/>
        <dbReference type="EC" id="1.14.99.46"/>
    </reaction>
</comment>
<comment type="catalytic activity">
    <reaction evidence="1">
        <text>thymine + FMNH2 + NADH + O2 = (Z)-2-methylureidoacrylate + FMN + NAD(+) + H2O + H(+)</text>
        <dbReference type="Rhea" id="RHEA:31599"/>
        <dbReference type="ChEBI" id="CHEBI:15377"/>
        <dbReference type="ChEBI" id="CHEBI:15378"/>
        <dbReference type="ChEBI" id="CHEBI:15379"/>
        <dbReference type="ChEBI" id="CHEBI:17821"/>
        <dbReference type="ChEBI" id="CHEBI:57540"/>
        <dbReference type="ChEBI" id="CHEBI:57618"/>
        <dbReference type="ChEBI" id="CHEBI:57945"/>
        <dbReference type="ChEBI" id="CHEBI:58210"/>
        <dbReference type="ChEBI" id="CHEBI:143783"/>
        <dbReference type="EC" id="1.14.99.46"/>
    </reaction>
</comment>
<comment type="similarity">
    <text evidence="1">Belongs to the NtaA/SnaA/DszA monooxygenase family. RutA subfamily.</text>
</comment>
<keyword id="KW-0285">Flavoprotein</keyword>
<keyword id="KW-0288">FMN</keyword>
<keyword id="KW-0503">Monooxygenase</keyword>
<keyword id="KW-0521">NADP</keyword>
<keyword id="KW-0560">Oxidoreductase</keyword>
<keyword id="KW-1185">Reference proteome</keyword>
<name>RUTA_PANAM</name>
<organism>
    <name type="scientific">Pantoea ananatis (strain LMG 20103)</name>
    <dbReference type="NCBI Taxonomy" id="706191"/>
    <lineage>
        <taxon>Bacteria</taxon>
        <taxon>Pseudomonadati</taxon>
        <taxon>Pseudomonadota</taxon>
        <taxon>Gammaproteobacteria</taxon>
        <taxon>Enterobacterales</taxon>
        <taxon>Erwiniaceae</taxon>
        <taxon>Pantoea</taxon>
    </lineage>
</organism>
<proteinExistence type="inferred from homology"/>
<sequence>MKIGVFIPIGNNGWLISETAPQYKPTFELNKTIVQKAEHYHFDFALSMIKLRGFGGKTEFWEHNMESFTLMAGLAAVTSRIQLYATAATLVMPPAIVARMAATIDSISNGRFGVNVVTGWQKPEYEQMGMWPGDDYFTRRYDYLTEYVSVLRDLWGTGHCTLDGEFFKMDDCRVSPRPQSEMKVICAGQSDAGMAFSAKHADFNFCFGKGVNTPTAFAPTAARMKTAADAENRDVSSYVLFMVIADETDEAARAKWELYKAGADAEALSWLTDQSSKDTRSGSDTNVRQMADPTSAVNINMGTLVGSWASVARMLDEIDTVPGAGGVLLTFDDFVEGIENFGRYIQPLMKTRQHIGIEQKEVA</sequence>
<dbReference type="EC" id="1.14.99.46" evidence="1"/>
<dbReference type="EMBL" id="CP001875">
    <property type="protein sequence ID" value="ADD79200.1"/>
    <property type="molecule type" value="Genomic_DNA"/>
</dbReference>
<dbReference type="RefSeq" id="WP_013027866.1">
    <property type="nucleotide sequence ID" value="NC_013956.2"/>
</dbReference>
<dbReference type="SMR" id="D4GEU4"/>
<dbReference type="STRING" id="706191.PANA_4033"/>
<dbReference type="KEGG" id="pam:PANA_4033"/>
<dbReference type="eggNOG" id="COG2141">
    <property type="taxonomic scope" value="Bacteria"/>
</dbReference>
<dbReference type="HOGENOM" id="CLU_027853_1_1_6"/>
<dbReference type="Proteomes" id="UP000001702">
    <property type="component" value="Chromosome"/>
</dbReference>
<dbReference type="GO" id="GO:0008726">
    <property type="term" value="F:alkanesulfonate monooxygenase activity"/>
    <property type="evidence" value="ECO:0007669"/>
    <property type="project" value="TreeGrafter"/>
</dbReference>
<dbReference type="GO" id="GO:0052614">
    <property type="term" value="F:uracil oxygenase activity"/>
    <property type="evidence" value="ECO:0007669"/>
    <property type="project" value="UniProtKB-EC"/>
</dbReference>
<dbReference type="GO" id="GO:0046306">
    <property type="term" value="P:alkanesulfonate catabolic process"/>
    <property type="evidence" value="ECO:0007669"/>
    <property type="project" value="TreeGrafter"/>
</dbReference>
<dbReference type="GO" id="GO:0019740">
    <property type="term" value="P:nitrogen utilization"/>
    <property type="evidence" value="ECO:0007669"/>
    <property type="project" value="UniProtKB-UniRule"/>
</dbReference>
<dbReference type="GO" id="GO:0006212">
    <property type="term" value="P:uracil catabolic process"/>
    <property type="evidence" value="ECO:0007669"/>
    <property type="project" value="UniProtKB-UniRule"/>
</dbReference>
<dbReference type="CDD" id="cd01094">
    <property type="entry name" value="Alkanesulfonate_monoxygenase"/>
    <property type="match status" value="1"/>
</dbReference>
<dbReference type="FunFam" id="3.20.20.30:FF:000003">
    <property type="entry name" value="Pyrimidine monooxygenase RutA"/>
    <property type="match status" value="1"/>
</dbReference>
<dbReference type="Gene3D" id="3.20.20.30">
    <property type="entry name" value="Luciferase-like domain"/>
    <property type="match status" value="1"/>
</dbReference>
<dbReference type="HAMAP" id="MF_01699">
    <property type="entry name" value="RutA"/>
    <property type="match status" value="1"/>
</dbReference>
<dbReference type="InterPro" id="IPR011251">
    <property type="entry name" value="Luciferase-like_dom"/>
</dbReference>
<dbReference type="InterPro" id="IPR036661">
    <property type="entry name" value="Luciferase-like_sf"/>
</dbReference>
<dbReference type="InterPro" id="IPR019914">
    <property type="entry name" value="Pyrimidine_monooxygenase_RutA"/>
</dbReference>
<dbReference type="InterPro" id="IPR050172">
    <property type="entry name" value="SsuD_RutA_monooxygenase"/>
</dbReference>
<dbReference type="NCBIfam" id="TIGR03612">
    <property type="entry name" value="RutA"/>
    <property type="match status" value="1"/>
</dbReference>
<dbReference type="PANTHER" id="PTHR42847">
    <property type="entry name" value="ALKANESULFONATE MONOOXYGENASE"/>
    <property type="match status" value="1"/>
</dbReference>
<dbReference type="PANTHER" id="PTHR42847:SF4">
    <property type="entry name" value="ALKANESULFONATE MONOOXYGENASE-RELATED"/>
    <property type="match status" value="1"/>
</dbReference>
<dbReference type="Pfam" id="PF00296">
    <property type="entry name" value="Bac_luciferase"/>
    <property type="match status" value="1"/>
</dbReference>
<dbReference type="SUPFAM" id="SSF51679">
    <property type="entry name" value="Bacterial luciferase-like"/>
    <property type="match status" value="1"/>
</dbReference>
<gene>
    <name evidence="1" type="primary">rutA</name>
    <name type="ordered locus">PANA_4033</name>
</gene>
<accession>D4GEU4</accession>